<evidence type="ECO:0000255" key="1">
    <source>
        <dbReference type="HAMAP-Rule" id="MF_01864"/>
    </source>
</evidence>
<evidence type="ECO:0000255" key="2">
    <source>
        <dbReference type="PROSITE-ProRule" id="PRU01266"/>
    </source>
</evidence>
<evidence type="ECO:0000305" key="3"/>
<keyword id="KW-0004">4Fe-4S</keyword>
<keyword id="KW-0963">Cytoplasm</keyword>
<keyword id="KW-0408">Iron</keyword>
<keyword id="KW-0411">Iron-sulfur</keyword>
<keyword id="KW-0479">Metal-binding</keyword>
<keyword id="KW-0949">S-adenosyl-L-methionine</keyword>
<keyword id="KW-0808">Transferase</keyword>
<keyword id="KW-0819">tRNA processing</keyword>
<gene>
    <name evidence="1" type="primary">miaB</name>
    <name type="ordered locus">YPTS_1170</name>
</gene>
<dbReference type="EC" id="2.8.4.3" evidence="1"/>
<dbReference type="EMBL" id="CP001048">
    <property type="protein sequence ID" value="ACC88146.1"/>
    <property type="status" value="ALT_INIT"/>
    <property type="molecule type" value="Genomic_DNA"/>
</dbReference>
<dbReference type="RefSeq" id="WP_011191936.1">
    <property type="nucleotide sequence ID" value="NZ_CP009780.1"/>
</dbReference>
<dbReference type="SMR" id="B2K896"/>
<dbReference type="KEGG" id="ypb:YPTS_1170"/>
<dbReference type="PATRIC" id="fig|502801.10.peg.517"/>
<dbReference type="GO" id="GO:0005829">
    <property type="term" value="C:cytosol"/>
    <property type="evidence" value="ECO:0007669"/>
    <property type="project" value="TreeGrafter"/>
</dbReference>
<dbReference type="GO" id="GO:0051539">
    <property type="term" value="F:4 iron, 4 sulfur cluster binding"/>
    <property type="evidence" value="ECO:0007669"/>
    <property type="project" value="UniProtKB-UniRule"/>
</dbReference>
<dbReference type="GO" id="GO:0046872">
    <property type="term" value="F:metal ion binding"/>
    <property type="evidence" value="ECO:0007669"/>
    <property type="project" value="UniProtKB-KW"/>
</dbReference>
<dbReference type="GO" id="GO:0035597">
    <property type="term" value="F:N6-isopentenyladenosine methylthiotransferase activity"/>
    <property type="evidence" value="ECO:0007669"/>
    <property type="project" value="TreeGrafter"/>
</dbReference>
<dbReference type="CDD" id="cd01335">
    <property type="entry name" value="Radical_SAM"/>
    <property type="match status" value="1"/>
</dbReference>
<dbReference type="FunFam" id="3.40.50.12160:FF:000001">
    <property type="entry name" value="tRNA-2-methylthio-N(6)-dimethylallyladenosine synthase"/>
    <property type="match status" value="1"/>
</dbReference>
<dbReference type="FunFam" id="3.80.30.20:FF:000001">
    <property type="entry name" value="tRNA-2-methylthio-N(6)-dimethylallyladenosine synthase 2"/>
    <property type="match status" value="1"/>
</dbReference>
<dbReference type="Gene3D" id="3.40.50.12160">
    <property type="entry name" value="Methylthiotransferase, N-terminal domain"/>
    <property type="match status" value="1"/>
</dbReference>
<dbReference type="Gene3D" id="3.80.30.20">
    <property type="entry name" value="tm_1862 like domain"/>
    <property type="match status" value="1"/>
</dbReference>
<dbReference type="HAMAP" id="MF_01864">
    <property type="entry name" value="tRNA_metthiotr_MiaB"/>
    <property type="match status" value="1"/>
</dbReference>
<dbReference type="InterPro" id="IPR006638">
    <property type="entry name" value="Elp3/MiaA/NifB-like_rSAM"/>
</dbReference>
<dbReference type="InterPro" id="IPR005839">
    <property type="entry name" value="Methylthiotransferase"/>
</dbReference>
<dbReference type="InterPro" id="IPR020612">
    <property type="entry name" value="Methylthiotransferase_CS"/>
</dbReference>
<dbReference type="InterPro" id="IPR013848">
    <property type="entry name" value="Methylthiotransferase_N"/>
</dbReference>
<dbReference type="InterPro" id="IPR038135">
    <property type="entry name" value="Methylthiotransferase_N_sf"/>
</dbReference>
<dbReference type="InterPro" id="IPR006463">
    <property type="entry name" value="MiaB_methiolase"/>
</dbReference>
<dbReference type="InterPro" id="IPR007197">
    <property type="entry name" value="rSAM"/>
</dbReference>
<dbReference type="InterPro" id="IPR023404">
    <property type="entry name" value="rSAM_horseshoe"/>
</dbReference>
<dbReference type="InterPro" id="IPR002792">
    <property type="entry name" value="TRAM_dom"/>
</dbReference>
<dbReference type="NCBIfam" id="TIGR01574">
    <property type="entry name" value="miaB-methiolase"/>
    <property type="match status" value="1"/>
</dbReference>
<dbReference type="NCBIfam" id="TIGR00089">
    <property type="entry name" value="MiaB/RimO family radical SAM methylthiotransferase"/>
    <property type="match status" value="1"/>
</dbReference>
<dbReference type="PANTHER" id="PTHR43020">
    <property type="entry name" value="CDK5 REGULATORY SUBUNIT-ASSOCIATED PROTEIN 1"/>
    <property type="match status" value="1"/>
</dbReference>
<dbReference type="PANTHER" id="PTHR43020:SF2">
    <property type="entry name" value="MITOCHONDRIAL TRNA METHYLTHIOTRANSFERASE CDK5RAP1"/>
    <property type="match status" value="1"/>
</dbReference>
<dbReference type="Pfam" id="PF04055">
    <property type="entry name" value="Radical_SAM"/>
    <property type="match status" value="1"/>
</dbReference>
<dbReference type="Pfam" id="PF01938">
    <property type="entry name" value="TRAM"/>
    <property type="match status" value="1"/>
</dbReference>
<dbReference type="Pfam" id="PF00919">
    <property type="entry name" value="UPF0004"/>
    <property type="match status" value="1"/>
</dbReference>
<dbReference type="SFLD" id="SFLDF00273">
    <property type="entry name" value="(dimethylallyl)adenosine_tRNA"/>
    <property type="match status" value="1"/>
</dbReference>
<dbReference type="SFLD" id="SFLDG01082">
    <property type="entry name" value="B12-binding_domain_containing"/>
    <property type="match status" value="1"/>
</dbReference>
<dbReference type="SFLD" id="SFLDG01061">
    <property type="entry name" value="methylthiotransferase"/>
    <property type="match status" value="1"/>
</dbReference>
<dbReference type="SMART" id="SM00729">
    <property type="entry name" value="Elp3"/>
    <property type="match status" value="1"/>
</dbReference>
<dbReference type="SUPFAM" id="SSF102114">
    <property type="entry name" value="Radical SAM enzymes"/>
    <property type="match status" value="1"/>
</dbReference>
<dbReference type="PROSITE" id="PS51449">
    <property type="entry name" value="MTTASE_N"/>
    <property type="match status" value="1"/>
</dbReference>
<dbReference type="PROSITE" id="PS01278">
    <property type="entry name" value="MTTASE_RADICAL"/>
    <property type="match status" value="1"/>
</dbReference>
<dbReference type="PROSITE" id="PS51918">
    <property type="entry name" value="RADICAL_SAM"/>
    <property type="match status" value="1"/>
</dbReference>
<dbReference type="PROSITE" id="PS50926">
    <property type="entry name" value="TRAM"/>
    <property type="match status" value="1"/>
</dbReference>
<reference key="1">
    <citation type="submission" date="2008-04" db="EMBL/GenBank/DDBJ databases">
        <title>Complete sequence of Yersinia pseudotuberculosis PB1/+.</title>
        <authorList>
            <person name="Copeland A."/>
            <person name="Lucas S."/>
            <person name="Lapidus A."/>
            <person name="Glavina del Rio T."/>
            <person name="Dalin E."/>
            <person name="Tice H."/>
            <person name="Bruce D."/>
            <person name="Goodwin L."/>
            <person name="Pitluck S."/>
            <person name="Munk A.C."/>
            <person name="Brettin T."/>
            <person name="Detter J.C."/>
            <person name="Han C."/>
            <person name="Tapia R."/>
            <person name="Schmutz J."/>
            <person name="Larimer F."/>
            <person name="Land M."/>
            <person name="Hauser L."/>
            <person name="Challacombe J.F."/>
            <person name="Green L."/>
            <person name="Lindler L.E."/>
            <person name="Nikolich M.P."/>
            <person name="Richardson P."/>
        </authorList>
    </citation>
    <scope>NUCLEOTIDE SEQUENCE [LARGE SCALE GENOMIC DNA]</scope>
    <source>
        <strain>PB1/+</strain>
    </source>
</reference>
<proteinExistence type="inferred from homology"/>
<accession>B2K896</accession>
<protein>
    <recommendedName>
        <fullName evidence="1">tRNA-2-methylthio-N(6)-dimethylallyladenosine synthase</fullName>
        <ecNumber evidence="1">2.8.4.3</ecNumber>
    </recommendedName>
    <alternativeName>
        <fullName evidence="1">(Dimethylallyl)adenosine tRNA methylthiotransferase MiaB</fullName>
    </alternativeName>
    <alternativeName>
        <fullName evidence="1">tRNA-i(6)A37 methylthiotransferase</fullName>
    </alternativeName>
</protein>
<name>MIAB_YERPB</name>
<sequence>MTKKLHIKTWGCQMNEYDSSKMADLLASTHGYQLTTIPEEADLLLLNTCSIREKAQEKVFSLLGQWKLLKEKNPQLIIGVGGCVASQEGEQLRQRAPCVDVIFGPQTLHRLPEMINHVQGTNSPVVDISFPEIEKFDRLPEPRAEGPTAFVSIMEGCNKYCTFCVVPYTRGEEVSRPSDDILFEIAQLAAQGVREVNLLGQNVNAYRGATYDGDICSFAELLRLVAAIDGIDRIRFTTSHPIEFTDDIIDVYRDTPELVSFLHLPVQSGSDRILTMMKRAHTALEYKAIIRKLRQARPDIQISSDFIVGFPGETQQDFEQTMKLVADIHFDTSYSFIYSPRPGTPAADLPDNVSEEEKKQRLHILQQRISQQAMEISRKMVGTVQRVLVEGTSRKNVMELAGRTENNRVVNFEGSPDMIGKFVDVEIVNVYASSLRGILLRTEDQMDLRTHESPQSVIARTRKENEIGVGIYQP</sequence>
<feature type="chain" id="PRO_0000374661" description="tRNA-2-methylthio-N(6)-dimethylallyladenosine synthase">
    <location>
        <begin position="1"/>
        <end position="474"/>
    </location>
</feature>
<feature type="domain" description="MTTase N-terminal" evidence="1">
    <location>
        <begin position="3"/>
        <end position="120"/>
    </location>
</feature>
<feature type="domain" description="Radical SAM core" evidence="2">
    <location>
        <begin position="143"/>
        <end position="375"/>
    </location>
</feature>
<feature type="domain" description="TRAM" evidence="1">
    <location>
        <begin position="378"/>
        <end position="441"/>
    </location>
</feature>
<feature type="binding site" evidence="1">
    <location>
        <position position="12"/>
    </location>
    <ligand>
        <name>[4Fe-4S] cluster</name>
        <dbReference type="ChEBI" id="CHEBI:49883"/>
        <label>1</label>
    </ligand>
</feature>
<feature type="binding site" evidence="1">
    <location>
        <position position="49"/>
    </location>
    <ligand>
        <name>[4Fe-4S] cluster</name>
        <dbReference type="ChEBI" id="CHEBI:49883"/>
        <label>1</label>
    </ligand>
</feature>
<feature type="binding site" evidence="1">
    <location>
        <position position="83"/>
    </location>
    <ligand>
        <name>[4Fe-4S] cluster</name>
        <dbReference type="ChEBI" id="CHEBI:49883"/>
        <label>1</label>
    </ligand>
</feature>
<feature type="binding site" evidence="1">
    <location>
        <position position="157"/>
    </location>
    <ligand>
        <name>[4Fe-4S] cluster</name>
        <dbReference type="ChEBI" id="CHEBI:49883"/>
        <label>2</label>
        <note>4Fe-4S-S-AdoMet</note>
    </ligand>
</feature>
<feature type="binding site" evidence="1">
    <location>
        <position position="161"/>
    </location>
    <ligand>
        <name>[4Fe-4S] cluster</name>
        <dbReference type="ChEBI" id="CHEBI:49883"/>
        <label>2</label>
        <note>4Fe-4S-S-AdoMet</note>
    </ligand>
</feature>
<feature type="binding site" evidence="1">
    <location>
        <position position="164"/>
    </location>
    <ligand>
        <name>[4Fe-4S] cluster</name>
        <dbReference type="ChEBI" id="CHEBI:49883"/>
        <label>2</label>
        <note>4Fe-4S-S-AdoMet</note>
    </ligand>
</feature>
<organism>
    <name type="scientific">Yersinia pseudotuberculosis serotype IB (strain PB1/+)</name>
    <dbReference type="NCBI Taxonomy" id="502801"/>
    <lineage>
        <taxon>Bacteria</taxon>
        <taxon>Pseudomonadati</taxon>
        <taxon>Pseudomonadota</taxon>
        <taxon>Gammaproteobacteria</taxon>
        <taxon>Enterobacterales</taxon>
        <taxon>Yersiniaceae</taxon>
        <taxon>Yersinia</taxon>
    </lineage>
</organism>
<comment type="function">
    <text evidence="1">Catalyzes the methylthiolation of N6-(dimethylallyl)adenosine (i(6)A), leading to the formation of 2-methylthio-N6-(dimethylallyl)adenosine (ms(2)i(6)A) at position 37 in tRNAs that read codons beginning with uridine.</text>
</comment>
<comment type="catalytic activity">
    <reaction evidence="1">
        <text>N(6)-dimethylallyladenosine(37) in tRNA + (sulfur carrier)-SH + AH2 + 2 S-adenosyl-L-methionine = 2-methylsulfanyl-N(6)-dimethylallyladenosine(37) in tRNA + (sulfur carrier)-H + 5'-deoxyadenosine + L-methionine + A + S-adenosyl-L-homocysteine + 2 H(+)</text>
        <dbReference type="Rhea" id="RHEA:37067"/>
        <dbReference type="Rhea" id="RHEA-COMP:10375"/>
        <dbReference type="Rhea" id="RHEA-COMP:10376"/>
        <dbReference type="Rhea" id="RHEA-COMP:14737"/>
        <dbReference type="Rhea" id="RHEA-COMP:14739"/>
        <dbReference type="ChEBI" id="CHEBI:13193"/>
        <dbReference type="ChEBI" id="CHEBI:15378"/>
        <dbReference type="ChEBI" id="CHEBI:17319"/>
        <dbReference type="ChEBI" id="CHEBI:17499"/>
        <dbReference type="ChEBI" id="CHEBI:29917"/>
        <dbReference type="ChEBI" id="CHEBI:57844"/>
        <dbReference type="ChEBI" id="CHEBI:57856"/>
        <dbReference type="ChEBI" id="CHEBI:59789"/>
        <dbReference type="ChEBI" id="CHEBI:64428"/>
        <dbReference type="ChEBI" id="CHEBI:74415"/>
        <dbReference type="ChEBI" id="CHEBI:74417"/>
        <dbReference type="EC" id="2.8.4.3"/>
    </reaction>
</comment>
<comment type="cofactor">
    <cofactor evidence="1">
        <name>[4Fe-4S] cluster</name>
        <dbReference type="ChEBI" id="CHEBI:49883"/>
    </cofactor>
    <text evidence="1">Binds 2 [4Fe-4S] clusters. One cluster is coordinated with 3 cysteines and an exchangeable S-adenosyl-L-methionine.</text>
</comment>
<comment type="subunit">
    <text evidence="1">Monomer.</text>
</comment>
<comment type="subcellular location">
    <subcellularLocation>
        <location evidence="1">Cytoplasm</location>
    </subcellularLocation>
</comment>
<comment type="similarity">
    <text evidence="1">Belongs to the methylthiotransferase family. MiaB subfamily.</text>
</comment>
<comment type="sequence caution" evidence="3">
    <conflict type="erroneous initiation">
        <sequence resource="EMBL-CDS" id="ACC88146"/>
    </conflict>
</comment>